<dbReference type="EC" id="1.-.-.-" evidence="9"/>
<dbReference type="EMBL" id="CAGA01000032">
    <property type="protein sequence ID" value="CCE31570.1"/>
    <property type="molecule type" value="Genomic_DNA"/>
</dbReference>
<dbReference type="SMR" id="M1W850"/>
<dbReference type="STRING" id="1111077.M1W850"/>
<dbReference type="VEuPathDB" id="FungiDB:CPUR_05423"/>
<dbReference type="eggNOG" id="KOG2614">
    <property type="taxonomic scope" value="Eukaryota"/>
</dbReference>
<dbReference type="HOGENOM" id="CLU_009665_19_1_1"/>
<dbReference type="OrthoDB" id="16820at2759"/>
<dbReference type="PhylomeDB" id="M1W850"/>
<dbReference type="Proteomes" id="UP000016801">
    <property type="component" value="Unassembled WGS sequence"/>
</dbReference>
<dbReference type="GO" id="GO:0071949">
    <property type="term" value="F:FAD binding"/>
    <property type="evidence" value="ECO:0007669"/>
    <property type="project" value="InterPro"/>
</dbReference>
<dbReference type="GO" id="GO:0004497">
    <property type="term" value="F:monooxygenase activity"/>
    <property type="evidence" value="ECO:0007669"/>
    <property type="project" value="UniProtKB-KW"/>
</dbReference>
<dbReference type="Gene3D" id="3.50.50.60">
    <property type="entry name" value="FAD/NAD(P)-binding domain"/>
    <property type="match status" value="1"/>
</dbReference>
<dbReference type="InterPro" id="IPR002938">
    <property type="entry name" value="FAD-bd"/>
</dbReference>
<dbReference type="InterPro" id="IPR050493">
    <property type="entry name" value="FAD-dep_Monooxygenase_BioMet"/>
</dbReference>
<dbReference type="InterPro" id="IPR036188">
    <property type="entry name" value="FAD/NAD-bd_sf"/>
</dbReference>
<dbReference type="PANTHER" id="PTHR13789:SF315">
    <property type="entry name" value="FAD-DEPENDENT MONOOXYGENASE MDPD"/>
    <property type="match status" value="1"/>
</dbReference>
<dbReference type="PANTHER" id="PTHR13789">
    <property type="entry name" value="MONOOXYGENASE"/>
    <property type="match status" value="1"/>
</dbReference>
<dbReference type="Pfam" id="PF01494">
    <property type="entry name" value="FAD_binding_3"/>
    <property type="match status" value="1"/>
</dbReference>
<dbReference type="PRINTS" id="PR00420">
    <property type="entry name" value="RNGMNOXGNASE"/>
</dbReference>
<dbReference type="SUPFAM" id="SSF51905">
    <property type="entry name" value="FAD/NAD(P)-binding domain"/>
    <property type="match status" value="1"/>
</dbReference>
<feature type="chain" id="PRO_0000443972" description="FAD-dependent monooxygenase CPUR_05423">
    <location>
        <begin position="1"/>
        <end position="514"/>
    </location>
</feature>
<feature type="active site" evidence="2">
    <location>
        <position position="227"/>
    </location>
</feature>
<feature type="binding site" evidence="1">
    <location>
        <position position="79"/>
    </location>
    <ligand>
        <name>FAD</name>
        <dbReference type="ChEBI" id="CHEBI:57692"/>
    </ligand>
</feature>
<feature type="binding site" evidence="1">
    <location>
        <position position="146"/>
    </location>
    <ligand>
        <name>FAD</name>
        <dbReference type="ChEBI" id="CHEBI:57692"/>
    </ligand>
</feature>
<feature type="binding site" evidence="1">
    <location>
        <position position="358"/>
    </location>
    <ligand>
        <name>FAD</name>
        <dbReference type="ChEBI" id="CHEBI:57692"/>
    </ligand>
</feature>
<feature type="binding site" evidence="1">
    <location>
        <position position="371"/>
    </location>
    <ligand>
        <name>FAD</name>
        <dbReference type="ChEBI" id="CHEBI:57692"/>
    </ligand>
</feature>
<organism>
    <name type="scientific">Claviceps purpurea (strain 20.1)</name>
    <name type="common">Ergot fungus</name>
    <name type="synonym">Sphacelia segetum</name>
    <dbReference type="NCBI Taxonomy" id="1111077"/>
    <lineage>
        <taxon>Eukaryota</taxon>
        <taxon>Fungi</taxon>
        <taxon>Dikarya</taxon>
        <taxon>Ascomycota</taxon>
        <taxon>Pezizomycotina</taxon>
        <taxon>Sordariomycetes</taxon>
        <taxon>Hypocreomycetidae</taxon>
        <taxon>Hypocreales</taxon>
        <taxon>Clavicipitaceae</taxon>
        <taxon>Claviceps</taxon>
    </lineage>
</organism>
<reference key="1">
    <citation type="journal article" date="2013" name="PLoS Genet.">
        <title>Plant-symbiotic fungi as chemical engineers: Multi-genome analysis of the Clavicipitaceae reveals dynamics of alkaloid loci.</title>
        <authorList>
            <person name="Schardl C.L."/>
            <person name="Young C.A."/>
            <person name="Hesse U."/>
            <person name="Amyotte S.G."/>
            <person name="Andreeva K."/>
            <person name="Calie P.J."/>
            <person name="Fleetwood D.J."/>
            <person name="Haws D.C."/>
            <person name="Moore N."/>
            <person name="Oeser B."/>
            <person name="Panaccione D.G."/>
            <person name="Schweri K.K."/>
            <person name="Voisey C.R."/>
            <person name="Farman M.L."/>
            <person name="Jaromczyk J.W."/>
            <person name="Roe B.A."/>
            <person name="O'Sullivan D.M."/>
            <person name="Scott B."/>
            <person name="Tudzynski P."/>
            <person name="An Z."/>
            <person name="Arnaoudova E.G."/>
            <person name="Bullock C.T."/>
            <person name="Charlton N.D."/>
            <person name="Chen L."/>
            <person name="Cox M."/>
            <person name="Dinkins R.D."/>
            <person name="Florea S."/>
            <person name="Glenn A.E."/>
            <person name="Gordon A."/>
            <person name="Gueldener U."/>
            <person name="Harris D.R."/>
            <person name="Hollin W."/>
            <person name="Jaromczyk J."/>
            <person name="Johnson R.D."/>
            <person name="Khan A.K."/>
            <person name="Leistner E."/>
            <person name="Leuchtmann A."/>
            <person name="Li C."/>
            <person name="Liu J."/>
            <person name="Liu J."/>
            <person name="Liu M."/>
            <person name="Mace W."/>
            <person name="Machado C."/>
            <person name="Nagabhyru P."/>
            <person name="Pan J."/>
            <person name="Schmid J."/>
            <person name="Sugawara K."/>
            <person name="Steiner U."/>
            <person name="Takach J.E."/>
            <person name="Tanaka E."/>
            <person name="Webb J.S."/>
            <person name="Wilson E.V."/>
            <person name="Wiseman J.L."/>
            <person name="Yoshida R."/>
            <person name="Zeng Z."/>
        </authorList>
    </citation>
    <scope>NUCLEOTIDE SEQUENCE [LARGE SCALE GENOMIC DNA]</scope>
    <source>
        <strain>20.1</strain>
    </source>
</reference>
<reference key="2">
    <citation type="journal article" date="2016" name="Fungal Biol. Biotechnol.">
        <title>Identification and characterization of the ergochrome gene cluster in the plant pathogenic fungus Claviceps purpurea.</title>
        <authorList>
            <person name="Neubauer L."/>
            <person name="Dopstadt J."/>
            <person name="Humpf H.U."/>
            <person name="Tudzynski P."/>
        </authorList>
    </citation>
    <scope>FUNCTION</scope>
    <scope>INDUCTION</scope>
</reference>
<reference key="3">
    <citation type="journal article" date="2020" name="Org. Lett.">
        <title>Unraveling the fungal strategy for tetrahydroxanthone biosynthesis and diversification.</title>
        <authorList>
            <person name="Wei X."/>
            <person name="Matsuda Y."/>
        </authorList>
    </citation>
    <scope>FUNCTION</scope>
</reference>
<gene>
    <name type="ORF">CPUR_05423</name>
</gene>
<comment type="function">
    <text evidence="3 4 5 6">FAD-dependent monooxygenase; part of the ergochrome gene cluster responsible for the typical purple-black color of the ergot sclerotia (PubMed:28955461). The ergochrome gene cluster produces several ergot pigments including the yellow ergochrome secalonic acid and its derivatives, as well as the red anthraquinones endocrocin and clavorubin (PubMed:28955461). The pathway begins with the synthesis of atrochrysone thioester by the polyketide synthase (PKS) CPUR_05437 (By similarity). The atrochrysone carboxyl ACP thioesterase CPUR_05436 then breaks the thioester bond and releases the atrochrysone carboxylic acid from CPUR_05437 (By similarity). The atrochrysone carboxylic acid is then converted to atrochrysone which is further transformed into emodin anthrone (By similarity). The next step is performed by the anthrone oxygenase CPUR_05434 that catalyzes the oxidation of emodinanthrone to emodin (By similarity). Emodin is further modified to yield monodictyphenone via several steps involving CPUR_05427, CPUR_05428, CPUR_05429 and CPUR_05430 (By similarity). The short chain dehydrogenase/reductase CPUR_05418 then catalyzes the C-5 ketoreduction to give the xanthone skeleton of the monomeric units (PubMed:32105084). Ergochromes formation requires further dimerization steps of different xanthone units, probably catalyzed by the cytochrome P450 monooxygenase CPUR_05419 (PubMed:28955461). CPUR_05425, CPUR_05426 and CPUR_05431 are unique to Claviceps, thus it is likely that they are involved in further modification of xanthone units or in their dimerization (PubMed:28955461). The yellow ergochromes and the red anthraquinone pigments endocrocin and clavorubin are products from the same PKS derived precursors and the latter are likely shunt products in the pathway of xanthone biosynthesis (PubMed:28955461). It is proposed that atrochrysone carboxylic acid released from the PKS CPUR_05437 can also be converted to endocrocin anthrone which is further oxidized into endocrocin by CPUR_05435 (By similarity). Endocrocin could be then modified to clavorubin, possibly by CPUR_05423 and CPUR_05431 (PubMed:28955461). Clavorubin is the principal anthraquinone metabolite produced by the cluster with a much higher yield compared to endocrocin (PubMed:28955461).</text>
</comment>
<comment type="cofactor">
    <cofactor evidence="8">
        <name>FAD</name>
        <dbReference type="ChEBI" id="CHEBI:57692"/>
    </cofactor>
</comment>
<comment type="pathway">
    <text evidence="9">Pigment biosynthesis.</text>
</comment>
<comment type="induction">
    <text evidence="5">Expression correlates with the formation of the sclerotia and thus the pigment production and is directly regulated by the cluster-specific activator CPUR_05433 (PubMed:28955461).</text>
</comment>
<comment type="similarity">
    <text evidence="8">Belongs to the paxM FAD-dependent monooxygenase family.</text>
</comment>
<name>PIG1_CLAP2</name>
<protein>
    <recommendedName>
        <fullName evidence="7">FAD-dependent monooxygenase CPUR_05423</fullName>
        <ecNumber evidence="9">1.-.-.-</ecNumber>
    </recommendedName>
    <alternativeName>
        <fullName evidence="7">Ergochrome gene cluster protein CPUR_05423</fullName>
    </alternativeName>
</protein>
<sequence length="514" mass="57641">MVDKFLIETDQNEFQPNLWKNGDSDRLPNRCPETQLNVLVVGAGPSGLMTALECWRKGHNVVKILERSNSPVFTGDVIVIGPSALRAFRHWPDMCAELEKSKMDSIMYYRKHNGELILGPTSLGHNDPEYTAAWKGIPFAAPHQIRKDFYRMLLRQVARVGIRVEYGQRVEKYFDDEAAMLGGVITDQGTIMFADLVVAADANRTRSDLLIAGAHTPSRSSGMSVYRTAFPTERALQDEAFRTRWGDAIEKGISHHEFWMGPGMHLGLFISPEFVAFGLTPRDSFLHEGGNEPIESWEPDVDPEEVTKVLNRVPDWNPVIKSLVKNTQRGSIVHWPLLWRNLRREWTSKSGRVVQAGDAAHSSIPASISGGTLALEDAVTLASCLHLSCSSAGSKGAPLGARIYNLLRYQRVSCVQKMSFVNAEGLSGSSMEDAIKENPESVRVRFPRWLYRHDPEAYVYEKYGQAFAHLVEGTDFENTNLPPGHTFEPWTIEQIHKDMMAGKRVADFLDGDWS</sequence>
<keyword id="KW-0274">FAD</keyword>
<keyword id="KW-0285">Flavoprotein</keyword>
<keyword id="KW-0503">Monooxygenase</keyword>
<keyword id="KW-0560">Oxidoreductase</keyword>
<keyword id="KW-1185">Reference proteome</keyword>
<evidence type="ECO:0000250" key="1">
    <source>
        <dbReference type="UniProtKB" id="B8M9J8"/>
    </source>
</evidence>
<evidence type="ECO:0000250" key="2">
    <source>
        <dbReference type="UniProtKB" id="L0E4H0"/>
    </source>
</evidence>
<evidence type="ECO:0000250" key="3">
    <source>
        <dbReference type="UniProtKB" id="Q4W944"/>
    </source>
</evidence>
<evidence type="ECO:0000250" key="4">
    <source>
        <dbReference type="UniProtKB" id="Q5BH33"/>
    </source>
</evidence>
<evidence type="ECO:0000269" key="5">
    <source>
    </source>
</evidence>
<evidence type="ECO:0000269" key="6">
    <source>
    </source>
</evidence>
<evidence type="ECO:0000303" key="7">
    <source>
    </source>
</evidence>
<evidence type="ECO:0000305" key="8"/>
<evidence type="ECO:0000305" key="9">
    <source>
    </source>
</evidence>
<accession>M1W850</accession>
<proteinExistence type="evidence at transcript level"/>